<gene>
    <name evidence="1" type="primary">kup</name>
    <name type="ordered locus">BWG_3438</name>
</gene>
<evidence type="ECO:0000255" key="1">
    <source>
        <dbReference type="HAMAP-Rule" id="MF_01522"/>
    </source>
</evidence>
<sequence>MSTDNKQSLPAITLAAIGVVYGDIGTSPLYTLRECLSGQFGFGVERDAVFGFLSLIFWLLIFVVSIKYLTFVMRADNAGEGGILTLMSLAGRNTSARTTSMLVIMGLIGGSFFYGEVVITPAISVMSAIEGLEIVAPQLDTWIVPLSIIVLTLLFMIQKHGTAMVGKLFAPIMLTWFLILAGLGLRSIIANPEVLHALNPMWAVHFFLEYKTVSFIALGAVVLSITGVEALYADMGHFGKFPIRLAWFTVVLPSLTLNYFGQGALLLKNPEAIKNPFFLLAPDWALIPLLIIAALATVIASQAVISGVFSLTRQAVRLGYLSPMRIIHTSEMESGQIYIPFVNWMLYVAVVIVIVSFEHSSNLAAAYGIAVTGTMVLTSILSTTVARQNWHWNKYFVALILIAFLCVDIPLFTANLDKLLSGGWLPLSLGTVMFIVMTTWKSERFRLLRRMHEHGNSLEAMIASLEKSPPVRVPGTAVYMSRAINVIPFALMHNLKHNKVLHERVILLTLRTEDAPYVHNVRRVQIEQLSPTFWRVVASYGWRETPNVEEVFHRCGLEGLSCRMMETSFFMSHESLILGKRPWYLRLRGKLYLLLQRNALRAPDQFEIPPNRVIELGTQVEI</sequence>
<dbReference type="EMBL" id="CP001396">
    <property type="protein sequence ID" value="ACR64084.1"/>
    <property type="molecule type" value="Genomic_DNA"/>
</dbReference>
<dbReference type="RefSeq" id="WP_000102319.1">
    <property type="nucleotide sequence ID" value="NC_012759.1"/>
</dbReference>
<dbReference type="GeneID" id="75205465"/>
<dbReference type="KEGG" id="ebw:BWG_3438"/>
<dbReference type="HOGENOM" id="CLU_008142_4_2_6"/>
<dbReference type="GO" id="GO:0005886">
    <property type="term" value="C:plasma membrane"/>
    <property type="evidence" value="ECO:0007669"/>
    <property type="project" value="UniProtKB-SubCell"/>
</dbReference>
<dbReference type="GO" id="GO:0015079">
    <property type="term" value="F:potassium ion transmembrane transporter activity"/>
    <property type="evidence" value="ECO:0007669"/>
    <property type="project" value="UniProtKB-UniRule"/>
</dbReference>
<dbReference type="GO" id="GO:0015293">
    <property type="term" value="F:symporter activity"/>
    <property type="evidence" value="ECO:0007669"/>
    <property type="project" value="UniProtKB-UniRule"/>
</dbReference>
<dbReference type="HAMAP" id="MF_01522">
    <property type="entry name" value="Kup"/>
    <property type="match status" value="1"/>
</dbReference>
<dbReference type="InterPro" id="IPR003855">
    <property type="entry name" value="K+_transporter"/>
</dbReference>
<dbReference type="InterPro" id="IPR053952">
    <property type="entry name" value="K_trans_C"/>
</dbReference>
<dbReference type="InterPro" id="IPR053951">
    <property type="entry name" value="K_trans_N"/>
</dbReference>
<dbReference type="InterPro" id="IPR023051">
    <property type="entry name" value="Kup"/>
</dbReference>
<dbReference type="NCBIfam" id="TIGR00794">
    <property type="entry name" value="kup"/>
    <property type="match status" value="1"/>
</dbReference>
<dbReference type="NCBIfam" id="NF008015">
    <property type="entry name" value="PRK10745.1"/>
    <property type="match status" value="1"/>
</dbReference>
<dbReference type="PANTHER" id="PTHR30540:SF79">
    <property type="entry name" value="LOW AFFINITY POTASSIUM TRANSPORT SYSTEM PROTEIN KUP"/>
    <property type="match status" value="1"/>
</dbReference>
<dbReference type="PANTHER" id="PTHR30540">
    <property type="entry name" value="OSMOTIC STRESS POTASSIUM TRANSPORTER"/>
    <property type="match status" value="1"/>
</dbReference>
<dbReference type="Pfam" id="PF02705">
    <property type="entry name" value="K_trans"/>
    <property type="match status" value="1"/>
</dbReference>
<dbReference type="Pfam" id="PF22776">
    <property type="entry name" value="K_trans_C"/>
    <property type="match status" value="1"/>
</dbReference>
<comment type="function">
    <text evidence="1">Responsible for the low-affinity transport of potassium into the cell. Likely operates as a K(+):H(+) symporter.</text>
</comment>
<comment type="catalytic activity">
    <reaction evidence="1">
        <text>K(+)(in) + H(+)(in) = K(+)(out) + H(+)(out)</text>
        <dbReference type="Rhea" id="RHEA:28490"/>
        <dbReference type="ChEBI" id="CHEBI:15378"/>
        <dbReference type="ChEBI" id="CHEBI:29103"/>
    </reaction>
    <physiologicalReaction direction="right-to-left" evidence="1">
        <dbReference type="Rhea" id="RHEA:28492"/>
    </physiologicalReaction>
</comment>
<comment type="subcellular location">
    <subcellularLocation>
        <location evidence="1">Cell inner membrane</location>
        <topology evidence="1">Multi-pass membrane protein</topology>
    </subcellularLocation>
</comment>
<comment type="similarity">
    <text evidence="1">Belongs to the HAK/KUP transporter (TC 2.A.72) family.</text>
</comment>
<name>KUP_ECOBW</name>
<protein>
    <recommendedName>
        <fullName evidence="1">Low affinity potassium transport system protein Kup</fullName>
    </recommendedName>
    <alternativeName>
        <fullName evidence="1">Kup system potassium uptake protein</fullName>
    </alternativeName>
</protein>
<proteinExistence type="inferred from homology"/>
<feature type="chain" id="PRO_1000215374" description="Low affinity potassium transport system protein Kup">
    <location>
        <begin position="1"/>
        <end position="622"/>
    </location>
</feature>
<feature type="transmembrane region" description="Helical" evidence="1">
    <location>
        <begin position="9"/>
        <end position="29"/>
    </location>
</feature>
<feature type="transmembrane region" description="Helical" evidence="1">
    <location>
        <begin position="49"/>
        <end position="69"/>
    </location>
</feature>
<feature type="transmembrane region" description="Helical" evidence="1">
    <location>
        <begin position="103"/>
        <end position="123"/>
    </location>
</feature>
<feature type="transmembrane region" description="Helical" evidence="1">
    <location>
        <begin position="137"/>
        <end position="157"/>
    </location>
</feature>
<feature type="transmembrane region" description="Helical" evidence="1">
    <location>
        <begin position="165"/>
        <end position="185"/>
    </location>
</feature>
<feature type="transmembrane region" description="Helical" evidence="1">
    <location>
        <begin position="213"/>
        <end position="233"/>
    </location>
</feature>
<feature type="transmembrane region" description="Helical" evidence="1">
    <location>
        <begin position="247"/>
        <end position="267"/>
    </location>
</feature>
<feature type="transmembrane region" description="Helical" evidence="1">
    <location>
        <begin position="276"/>
        <end position="296"/>
    </location>
</feature>
<feature type="transmembrane region" description="Helical" evidence="1">
    <location>
        <begin position="337"/>
        <end position="357"/>
    </location>
</feature>
<feature type="transmembrane region" description="Helical" evidence="1">
    <location>
        <begin position="363"/>
        <end position="383"/>
    </location>
</feature>
<feature type="transmembrane region" description="Helical" evidence="1">
    <location>
        <begin position="396"/>
        <end position="416"/>
    </location>
</feature>
<feature type="transmembrane region" description="Helical" evidence="1">
    <location>
        <begin position="419"/>
        <end position="439"/>
    </location>
</feature>
<accession>C4ZZ25</accession>
<reference key="1">
    <citation type="journal article" date="2009" name="J. Bacteriol.">
        <title>Genomic sequencing reveals regulatory mutations and recombinational events in the widely used MC4100 lineage of Escherichia coli K-12.</title>
        <authorList>
            <person name="Ferenci T."/>
            <person name="Zhou Z."/>
            <person name="Betteridge T."/>
            <person name="Ren Y."/>
            <person name="Liu Y."/>
            <person name="Feng L."/>
            <person name="Reeves P.R."/>
            <person name="Wang L."/>
        </authorList>
    </citation>
    <scope>NUCLEOTIDE SEQUENCE [LARGE SCALE GENOMIC DNA]</scope>
    <source>
        <strain>K12 / MC4100 / BW2952</strain>
    </source>
</reference>
<keyword id="KW-0997">Cell inner membrane</keyword>
<keyword id="KW-1003">Cell membrane</keyword>
<keyword id="KW-0406">Ion transport</keyword>
<keyword id="KW-0472">Membrane</keyword>
<keyword id="KW-0630">Potassium</keyword>
<keyword id="KW-0633">Potassium transport</keyword>
<keyword id="KW-0769">Symport</keyword>
<keyword id="KW-0812">Transmembrane</keyword>
<keyword id="KW-1133">Transmembrane helix</keyword>
<keyword id="KW-0813">Transport</keyword>
<organism>
    <name type="scientific">Escherichia coli (strain K12 / MC4100 / BW2952)</name>
    <dbReference type="NCBI Taxonomy" id="595496"/>
    <lineage>
        <taxon>Bacteria</taxon>
        <taxon>Pseudomonadati</taxon>
        <taxon>Pseudomonadota</taxon>
        <taxon>Gammaproteobacteria</taxon>
        <taxon>Enterobacterales</taxon>
        <taxon>Enterobacteriaceae</taxon>
        <taxon>Escherichia</taxon>
    </lineage>
</organism>